<reference key="1">
    <citation type="journal article" date="2003" name="Proc. Natl. Acad. Sci. U.S.A.">
        <title>The genome sequence of Clostridium tetani, the causative agent of tetanus disease.</title>
        <authorList>
            <person name="Brueggemann H."/>
            <person name="Baeumer S."/>
            <person name="Fricke W.F."/>
            <person name="Wiezer A."/>
            <person name="Liesegang H."/>
            <person name="Decker I."/>
            <person name="Herzberg C."/>
            <person name="Martinez-Arias R."/>
            <person name="Merkl R."/>
            <person name="Henne A."/>
            <person name="Gottschalk G."/>
        </authorList>
    </citation>
    <scope>NUCLEOTIDE SEQUENCE [LARGE SCALE GENOMIC DNA]</scope>
    <source>
        <strain>Massachusetts / E88</strain>
    </source>
</reference>
<gene>
    <name evidence="1" type="primary">rimP</name>
    <name type="ordered locus">CTC_01272</name>
</gene>
<evidence type="ECO:0000255" key="1">
    <source>
        <dbReference type="HAMAP-Rule" id="MF_01077"/>
    </source>
</evidence>
<keyword id="KW-0963">Cytoplasm</keyword>
<keyword id="KW-1185">Reference proteome</keyword>
<keyword id="KW-0690">Ribosome biogenesis</keyword>
<name>RIMP_CLOTE</name>
<sequence length="153" mass="17832">MNNKTFIDNLKELTEPIVNDLDYELYYLEFVNENKENYLRIYIDSESGIGLEDCEKVSRAVSAMLDEKDPIDTSYYLEVSSPGLERQLYDDKHIEDNIGKTACVRLESLFNGGRKFEGKLKSFDNENLTLEINAEDFKIPRKKIKRINLIYEG</sequence>
<dbReference type="EMBL" id="AE015927">
    <property type="protein sequence ID" value="AAO35839.1"/>
    <property type="molecule type" value="Genomic_DNA"/>
</dbReference>
<dbReference type="RefSeq" id="WP_011099501.1">
    <property type="nucleotide sequence ID" value="NC_004557.1"/>
</dbReference>
<dbReference type="SMR" id="Q895K1"/>
<dbReference type="STRING" id="212717.CTC_01272"/>
<dbReference type="GeneID" id="24254022"/>
<dbReference type="KEGG" id="ctc:CTC_01272"/>
<dbReference type="HOGENOM" id="CLU_070525_1_1_9"/>
<dbReference type="OrthoDB" id="9805006at2"/>
<dbReference type="Proteomes" id="UP000001412">
    <property type="component" value="Chromosome"/>
</dbReference>
<dbReference type="GO" id="GO:0005829">
    <property type="term" value="C:cytosol"/>
    <property type="evidence" value="ECO:0007669"/>
    <property type="project" value="TreeGrafter"/>
</dbReference>
<dbReference type="GO" id="GO:0000028">
    <property type="term" value="P:ribosomal small subunit assembly"/>
    <property type="evidence" value="ECO:0007669"/>
    <property type="project" value="TreeGrafter"/>
</dbReference>
<dbReference type="GO" id="GO:0006412">
    <property type="term" value="P:translation"/>
    <property type="evidence" value="ECO:0007669"/>
    <property type="project" value="TreeGrafter"/>
</dbReference>
<dbReference type="CDD" id="cd01734">
    <property type="entry name" value="YlxS_C"/>
    <property type="match status" value="1"/>
</dbReference>
<dbReference type="FunFam" id="3.30.300.70:FF:000001">
    <property type="entry name" value="Ribosome maturation factor RimP"/>
    <property type="match status" value="1"/>
</dbReference>
<dbReference type="Gene3D" id="2.30.30.180">
    <property type="entry name" value="Ribosome maturation factor RimP, C-terminal domain"/>
    <property type="match status" value="1"/>
</dbReference>
<dbReference type="Gene3D" id="3.30.300.70">
    <property type="entry name" value="RimP-like superfamily, N-terminal"/>
    <property type="match status" value="1"/>
</dbReference>
<dbReference type="HAMAP" id="MF_01077">
    <property type="entry name" value="RimP"/>
    <property type="match status" value="1"/>
</dbReference>
<dbReference type="InterPro" id="IPR003728">
    <property type="entry name" value="Ribosome_maturation_RimP"/>
</dbReference>
<dbReference type="InterPro" id="IPR028998">
    <property type="entry name" value="RimP_C"/>
</dbReference>
<dbReference type="InterPro" id="IPR036847">
    <property type="entry name" value="RimP_C_sf"/>
</dbReference>
<dbReference type="InterPro" id="IPR028989">
    <property type="entry name" value="RimP_N"/>
</dbReference>
<dbReference type="InterPro" id="IPR035956">
    <property type="entry name" value="RimP_N_sf"/>
</dbReference>
<dbReference type="NCBIfam" id="NF000934">
    <property type="entry name" value="PRK00092.3-1"/>
    <property type="match status" value="1"/>
</dbReference>
<dbReference type="PANTHER" id="PTHR33867">
    <property type="entry name" value="RIBOSOME MATURATION FACTOR RIMP"/>
    <property type="match status" value="1"/>
</dbReference>
<dbReference type="PANTHER" id="PTHR33867:SF1">
    <property type="entry name" value="RIBOSOME MATURATION FACTOR RIMP"/>
    <property type="match status" value="1"/>
</dbReference>
<dbReference type="Pfam" id="PF17384">
    <property type="entry name" value="DUF150_C"/>
    <property type="match status" value="1"/>
</dbReference>
<dbReference type="Pfam" id="PF02576">
    <property type="entry name" value="RimP_N"/>
    <property type="match status" value="1"/>
</dbReference>
<dbReference type="SUPFAM" id="SSF74942">
    <property type="entry name" value="YhbC-like, C-terminal domain"/>
    <property type="match status" value="1"/>
</dbReference>
<dbReference type="SUPFAM" id="SSF75420">
    <property type="entry name" value="YhbC-like, N-terminal domain"/>
    <property type="match status" value="1"/>
</dbReference>
<organism>
    <name type="scientific">Clostridium tetani (strain Massachusetts / E88)</name>
    <dbReference type="NCBI Taxonomy" id="212717"/>
    <lineage>
        <taxon>Bacteria</taxon>
        <taxon>Bacillati</taxon>
        <taxon>Bacillota</taxon>
        <taxon>Clostridia</taxon>
        <taxon>Eubacteriales</taxon>
        <taxon>Clostridiaceae</taxon>
        <taxon>Clostridium</taxon>
    </lineage>
</organism>
<accession>Q895K1</accession>
<feature type="chain" id="PRO_0000181862" description="Ribosome maturation factor RimP">
    <location>
        <begin position="1"/>
        <end position="153"/>
    </location>
</feature>
<protein>
    <recommendedName>
        <fullName evidence="1">Ribosome maturation factor RimP</fullName>
    </recommendedName>
</protein>
<comment type="function">
    <text evidence="1">Required for maturation of 30S ribosomal subunits.</text>
</comment>
<comment type="subcellular location">
    <subcellularLocation>
        <location evidence="1">Cytoplasm</location>
    </subcellularLocation>
</comment>
<comment type="similarity">
    <text evidence="1">Belongs to the RimP family.</text>
</comment>
<proteinExistence type="inferred from homology"/>